<sequence length="47" mass="4745">MYMLTIGLLTALGLAVGASFGKALGVAVGSYFTACIIIGIIKGALRK</sequence>
<organism>
    <name type="scientific">Escherichia phage T7</name>
    <name type="common">Bacteriophage T7</name>
    <dbReference type="NCBI Taxonomy" id="10760"/>
    <lineage>
        <taxon>Viruses</taxon>
        <taxon>Duplodnaviria</taxon>
        <taxon>Heunggongvirae</taxon>
        <taxon>Uroviricota</taxon>
        <taxon>Caudoviricetes</taxon>
        <taxon>Autographiviridae</taxon>
        <taxon>Studiervirinae</taxon>
        <taxon>Teseptimavirus</taxon>
        <taxon>Teseptimavirus T7</taxon>
    </lineage>
</organism>
<comment type="subcellular location">
    <subcellularLocation>
        <location evidence="2">Host membrane</location>
        <topology evidence="2">Single-pass membrane protein</topology>
    </subcellularLocation>
</comment>
<feature type="signal peptide" evidence="1">
    <location>
        <begin position="1"/>
        <end position="23"/>
    </location>
</feature>
<feature type="chain" id="PRO_0000106464" description="Protein 0.5">
    <location>
        <begin position="24"/>
        <end position="47"/>
    </location>
</feature>
<feature type="transmembrane region" description="Helical" evidence="1">
    <location>
        <begin position="24"/>
        <end position="43"/>
    </location>
</feature>
<protein>
    <recommendedName>
        <fullName>Protein 0.5</fullName>
    </recommendedName>
    <alternativeName>
        <fullName>Gene product 0.5</fullName>
        <shortName>Gp0.5</shortName>
    </alternativeName>
</protein>
<proteinExistence type="inferred from homology"/>
<dbReference type="EMBL" id="V01146">
    <property type="protein sequence ID" value="CAA24386.1"/>
    <property type="molecule type" value="Genomic_DNA"/>
</dbReference>
<dbReference type="EMBL" id="V01127">
    <property type="protein sequence ID" value="CAA24329.1"/>
    <property type="molecule type" value="Genomic_DNA"/>
</dbReference>
<dbReference type="PIR" id="C43002">
    <property type="entry name" value="W0BP57"/>
</dbReference>
<dbReference type="RefSeq" id="NP_041956.1">
    <property type="nucleotide sequence ID" value="NC_001604.1"/>
</dbReference>
<dbReference type="SMR" id="P03777"/>
<dbReference type="KEGG" id="vg:1261051"/>
<dbReference type="Proteomes" id="UP000000840">
    <property type="component" value="Genome"/>
</dbReference>
<dbReference type="GO" id="GO:0033644">
    <property type="term" value="C:host cell membrane"/>
    <property type="evidence" value="ECO:0007669"/>
    <property type="project" value="UniProtKB-SubCell"/>
</dbReference>
<dbReference type="GO" id="GO:0016020">
    <property type="term" value="C:membrane"/>
    <property type="evidence" value="ECO:0007669"/>
    <property type="project" value="UniProtKB-KW"/>
</dbReference>
<name>Y05_BPT7</name>
<accession>P03777</accession>
<gene>
    <name type="ordered locus">0.5</name>
</gene>
<organismHost>
    <name type="scientific">Escherichia coli</name>
    <dbReference type="NCBI Taxonomy" id="562"/>
</organismHost>
<keyword id="KW-1043">Host membrane</keyword>
<keyword id="KW-0472">Membrane</keyword>
<keyword id="KW-1185">Reference proteome</keyword>
<keyword id="KW-0732">Signal</keyword>
<keyword id="KW-0812">Transmembrane</keyword>
<keyword id="KW-1133">Transmembrane helix</keyword>
<evidence type="ECO:0000255" key="1"/>
<evidence type="ECO:0000305" key="2"/>
<reference key="1">
    <citation type="journal article" date="1983" name="J. Mol. Biol.">
        <title>Complete nucleotide sequence of bacteriophage T7 DNA and the locations of T7 genetic elements.</title>
        <authorList>
            <person name="Dunn J.J."/>
            <person name="Studier F.W."/>
        </authorList>
    </citation>
    <scope>NUCLEOTIDE SEQUENCE [LARGE SCALE GENOMIC DNA]</scope>
</reference>
<reference key="2">
    <citation type="journal article" date="1981" name="J. Mol. Biol.">
        <title>Nucleotide sequence from the genetic left end of bacteriophage T7 DNA to the beginning of gene 4.</title>
        <authorList>
            <person name="Dunn J.J."/>
            <person name="Studier F.W."/>
        </authorList>
    </citation>
    <scope>NUCLEOTIDE SEQUENCE [GENOMIC DNA]</scope>
</reference>